<gene>
    <name type="primary">GMFB</name>
</gene>
<organism>
    <name type="scientific">Homo sapiens</name>
    <name type="common">Human</name>
    <dbReference type="NCBI Taxonomy" id="9606"/>
    <lineage>
        <taxon>Eukaryota</taxon>
        <taxon>Metazoa</taxon>
        <taxon>Chordata</taxon>
        <taxon>Craniata</taxon>
        <taxon>Vertebrata</taxon>
        <taxon>Euteleostomi</taxon>
        <taxon>Mammalia</taxon>
        <taxon>Eutheria</taxon>
        <taxon>Euarchontoglires</taxon>
        <taxon>Primates</taxon>
        <taxon>Haplorrhini</taxon>
        <taxon>Catarrhini</taxon>
        <taxon>Hominidae</taxon>
        <taxon>Homo</taxon>
    </lineage>
</organism>
<keyword id="KW-0007">Acetylation</keyword>
<keyword id="KW-0339">Growth factor</keyword>
<keyword id="KW-0597">Phosphoprotein</keyword>
<keyword id="KW-1267">Proteomics identification</keyword>
<keyword id="KW-1185">Reference proteome</keyword>
<name>GMFB_HUMAN</name>
<comment type="function">
    <text>This protein causes differentiation of brain cells, stimulation of neural regeneration, and inhibition of proliferation of tumor cells.</text>
</comment>
<comment type="PTM">
    <text evidence="2">Phosphorylated; stimulated by phorbol ester.</text>
</comment>
<comment type="similarity">
    <text evidence="3">Belongs to the actin-binding proteins ADF family. GMF subfamily.</text>
</comment>
<comment type="sequence caution" evidence="3">
    <conflict type="frameshift">
        <sequence resource="EMBL-CDS" id="AAH05359"/>
    </conflict>
</comment>
<comment type="sequence caution" evidence="3">
    <conflict type="frameshift">
        <sequence resource="EMBL-CDS" id="AAP35430"/>
    </conflict>
</comment>
<sequence>MSESLVVCDVAEDLVEKLRKFRFRKETNNAAIIMKIDKDKRLVVLDEELEGISPDELKDELPERQPRFIVYSYKYQHDDGRVSYPLCFIFSSPVGCKPEQQMMYAGSKNKLVQTAELTKVFEIRNTEDLTEEWLREKLGFFH</sequence>
<evidence type="ECO:0000255" key="1">
    <source>
        <dbReference type="PROSITE-ProRule" id="PRU00599"/>
    </source>
</evidence>
<evidence type="ECO:0000269" key="2">
    <source>
    </source>
</evidence>
<evidence type="ECO:0000305" key="3"/>
<evidence type="ECO:0007744" key="4">
    <source>
    </source>
</evidence>
<evidence type="ECO:0007744" key="5">
    <source>
    </source>
</evidence>
<evidence type="ECO:0007744" key="6">
    <source>
    </source>
</evidence>
<proteinExistence type="evidence at protein level"/>
<feature type="initiator methionine" description="Removed" evidence="4 5 6">
    <location>
        <position position="1"/>
    </location>
</feature>
<feature type="chain" id="PRO_0000214943" description="Glia maturation factor beta">
    <location>
        <begin position="2"/>
        <end position="142"/>
    </location>
</feature>
<feature type="domain" description="ADF-H" evidence="1">
    <location>
        <begin position="4"/>
        <end position="139"/>
    </location>
</feature>
<feature type="modified residue" description="N-acetylserine" evidence="4 5 6">
    <location>
        <position position="2"/>
    </location>
</feature>
<reference key="1">
    <citation type="journal article" date="1991" name="J. Neurochem.">
        <title>Molecular cloning and expression of biologically active human glia maturation factor-beta.</title>
        <authorList>
            <person name="Kaplan R."/>
            <person name="Zaheer A."/>
            <person name="Jaye M."/>
            <person name="Lim R."/>
        </authorList>
    </citation>
    <scope>NUCLEOTIDE SEQUENCE [MRNA]</scope>
</reference>
<reference key="2">
    <citation type="submission" date="1997-02" db="EMBL/GenBank/DDBJ databases">
        <authorList>
            <person name="Saito T."/>
            <person name="Tanaka N."/>
            <person name="Toyomasu T."/>
        </authorList>
    </citation>
    <scope>NUCLEOTIDE SEQUENCE [MRNA]</scope>
    <source>
        <tissue>Brain</tissue>
    </source>
</reference>
<reference key="3">
    <citation type="submission" date="2003-05" db="EMBL/GenBank/DDBJ databases">
        <title>Cloning of human full-length CDSs in BD Creator(TM) system donor vector.</title>
        <authorList>
            <person name="Kalnine N."/>
            <person name="Chen X."/>
            <person name="Rolfs A."/>
            <person name="Halleck A."/>
            <person name="Hines L."/>
            <person name="Eisenstein S."/>
            <person name="Koundinya M."/>
            <person name="Raphael J."/>
            <person name="Moreira D."/>
            <person name="Kelley T."/>
            <person name="LaBaer J."/>
            <person name="Lin Y."/>
            <person name="Phelan M."/>
            <person name="Farmer A."/>
        </authorList>
    </citation>
    <scope>NUCLEOTIDE SEQUENCE [LARGE SCALE MRNA]</scope>
</reference>
<reference key="4">
    <citation type="submission" date="2004-06" db="EMBL/GenBank/DDBJ databases">
        <title>Cloning of human full open reading frames in Gateway(TM) system entry vector (pDONR201).</title>
        <authorList>
            <person name="Halleck A."/>
            <person name="Ebert L."/>
            <person name="Mkoundinya M."/>
            <person name="Schick M."/>
            <person name="Eisenstein S."/>
            <person name="Neubert P."/>
            <person name="Kstrang K."/>
            <person name="Schatten R."/>
            <person name="Shen B."/>
            <person name="Henze S."/>
            <person name="Mar W."/>
            <person name="Korn B."/>
            <person name="Zuo D."/>
            <person name="Hu Y."/>
            <person name="LaBaer J."/>
        </authorList>
    </citation>
    <scope>NUCLEOTIDE SEQUENCE [LARGE SCALE MRNA]</scope>
</reference>
<reference key="5">
    <citation type="journal article" date="2004" name="Nat. Genet.">
        <title>Complete sequencing and characterization of 21,243 full-length human cDNAs.</title>
        <authorList>
            <person name="Ota T."/>
            <person name="Suzuki Y."/>
            <person name="Nishikawa T."/>
            <person name="Otsuki T."/>
            <person name="Sugiyama T."/>
            <person name="Irie R."/>
            <person name="Wakamatsu A."/>
            <person name="Hayashi K."/>
            <person name="Sato H."/>
            <person name="Nagai K."/>
            <person name="Kimura K."/>
            <person name="Makita H."/>
            <person name="Sekine M."/>
            <person name="Obayashi M."/>
            <person name="Nishi T."/>
            <person name="Shibahara T."/>
            <person name="Tanaka T."/>
            <person name="Ishii S."/>
            <person name="Yamamoto J."/>
            <person name="Saito K."/>
            <person name="Kawai Y."/>
            <person name="Isono Y."/>
            <person name="Nakamura Y."/>
            <person name="Nagahari K."/>
            <person name="Murakami K."/>
            <person name="Yasuda T."/>
            <person name="Iwayanagi T."/>
            <person name="Wagatsuma M."/>
            <person name="Shiratori A."/>
            <person name="Sudo H."/>
            <person name="Hosoiri T."/>
            <person name="Kaku Y."/>
            <person name="Kodaira H."/>
            <person name="Kondo H."/>
            <person name="Sugawara M."/>
            <person name="Takahashi M."/>
            <person name="Kanda K."/>
            <person name="Yokoi T."/>
            <person name="Furuya T."/>
            <person name="Kikkawa E."/>
            <person name="Omura Y."/>
            <person name="Abe K."/>
            <person name="Kamihara K."/>
            <person name="Katsuta N."/>
            <person name="Sato K."/>
            <person name="Tanikawa M."/>
            <person name="Yamazaki M."/>
            <person name="Ninomiya K."/>
            <person name="Ishibashi T."/>
            <person name="Yamashita H."/>
            <person name="Murakawa K."/>
            <person name="Fujimori K."/>
            <person name="Tanai H."/>
            <person name="Kimata M."/>
            <person name="Watanabe M."/>
            <person name="Hiraoka S."/>
            <person name="Chiba Y."/>
            <person name="Ishida S."/>
            <person name="Ono Y."/>
            <person name="Takiguchi S."/>
            <person name="Watanabe S."/>
            <person name="Yosida M."/>
            <person name="Hotuta T."/>
            <person name="Kusano J."/>
            <person name="Kanehori K."/>
            <person name="Takahashi-Fujii A."/>
            <person name="Hara H."/>
            <person name="Tanase T.-O."/>
            <person name="Nomura Y."/>
            <person name="Togiya S."/>
            <person name="Komai F."/>
            <person name="Hara R."/>
            <person name="Takeuchi K."/>
            <person name="Arita M."/>
            <person name="Imose N."/>
            <person name="Musashino K."/>
            <person name="Yuuki H."/>
            <person name="Oshima A."/>
            <person name="Sasaki N."/>
            <person name="Aotsuka S."/>
            <person name="Yoshikawa Y."/>
            <person name="Matsunawa H."/>
            <person name="Ichihara T."/>
            <person name="Shiohata N."/>
            <person name="Sano S."/>
            <person name="Moriya S."/>
            <person name="Momiyama H."/>
            <person name="Satoh N."/>
            <person name="Takami S."/>
            <person name="Terashima Y."/>
            <person name="Suzuki O."/>
            <person name="Nakagawa S."/>
            <person name="Senoh A."/>
            <person name="Mizoguchi H."/>
            <person name="Goto Y."/>
            <person name="Shimizu F."/>
            <person name="Wakebe H."/>
            <person name="Hishigaki H."/>
            <person name="Watanabe T."/>
            <person name="Sugiyama A."/>
            <person name="Takemoto M."/>
            <person name="Kawakami B."/>
            <person name="Yamazaki M."/>
            <person name="Watanabe K."/>
            <person name="Kumagai A."/>
            <person name="Itakura S."/>
            <person name="Fukuzumi Y."/>
            <person name="Fujimori Y."/>
            <person name="Komiyama M."/>
            <person name="Tashiro H."/>
            <person name="Tanigami A."/>
            <person name="Fujiwara T."/>
            <person name="Ono T."/>
            <person name="Yamada K."/>
            <person name="Fujii Y."/>
            <person name="Ozaki K."/>
            <person name="Hirao M."/>
            <person name="Ohmori Y."/>
            <person name="Kawabata A."/>
            <person name="Hikiji T."/>
            <person name="Kobatake N."/>
            <person name="Inagaki H."/>
            <person name="Ikema Y."/>
            <person name="Okamoto S."/>
            <person name="Okitani R."/>
            <person name="Kawakami T."/>
            <person name="Noguchi S."/>
            <person name="Itoh T."/>
            <person name="Shigeta K."/>
            <person name="Senba T."/>
            <person name="Matsumura K."/>
            <person name="Nakajima Y."/>
            <person name="Mizuno T."/>
            <person name="Morinaga M."/>
            <person name="Sasaki M."/>
            <person name="Togashi T."/>
            <person name="Oyama M."/>
            <person name="Hata H."/>
            <person name="Watanabe M."/>
            <person name="Komatsu T."/>
            <person name="Mizushima-Sugano J."/>
            <person name="Satoh T."/>
            <person name="Shirai Y."/>
            <person name="Takahashi Y."/>
            <person name="Nakagawa K."/>
            <person name="Okumura K."/>
            <person name="Nagase T."/>
            <person name="Nomura N."/>
            <person name="Kikuchi H."/>
            <person name="Masuho Y."/>
            <person name="Yamashita R."/>
            <person name="Nakai K."/>
            <person name="Yada T."/>
            <person name="Nakamura Y."/>
            <person name="Ohara O."/>
            <person name="Isogai T."/>
            <person name="Sugano S."/>
        </authorList>
    </citation>
    <scope>NUCLEOTIDE SEQUENCE [LARGE SCALE MRNA]</scope>
    <source>
        <tissue>Amygdala</tissue>
    </source>
</reference>
<reference key="6">
    <citation type="submission" date="2005-07" db="EMBL/GenBank/DDBJ databases">
        <authorList>
            <person name="Mural R.J."/>
            <person name="Istrail S."/>
            <person name="Sutton G.G."/>
            <person name="Florea L."/>
            <person name="Halpern A.L."/>
            <person name="Mobarry C.M."/>
            <person name="Lippert R."/>
            <person name="Walenz B."/>
            <person name="Shatkay H."/>
            <person name="Dew I."/>
            <person name="Miller J.R."/>
            <person name="Flanigan M.J."/>
            <person name="Edwards N.J."/>
            <person name="Bolanos R."/>
            <person name="Fasulo D."/>
            <person name="Halldorsson B.V."/>
            <person name="Hannenhalli S."/>
            <person name="Turner R."/>
            <person name="Yooseph S."/>
            <person name="Lu F."/>
            <person name="Nusskern D.R."/>
            <person name="Shue B.C."/>
            <person name="Zheng X.H."/>
            <person name="Zhong F."/>
            <person name="Delcher A.L."/>
            <person name="Huson D.H."/>
            <person name="Kravitz S.A."/>
            <person name="Mouchard L."/>
            <person name="Reinert K."/>
            <person name="Remington K.A."/>
            <person name="Clark A.G."/>
            <person name="Waterman M.S."/>
            <person name="Eichler E.E."/>
            <person name="Adams M.D."/>
            <person name="Hunkapiller M.W."/>
            <person name="Myers E.W."/>
            <person name="Venter J.C."/>
        </authorList>
    </citation>
    <scope>NUCLEOTIDE SEQUENCE [LARGE SCALE GENOMIC DNA]</scope>
</reference>
<reference key="7">
    <citation type="journal article" date="2004" name="Genome Res.">
        <title>The status, quality, and expansion of the NIH full-length cDNA project: the Mammalian Gene Collection (MGC).</title>
        <authorList>
            <consortium name="The MGC Project Team"/>
        </authorList>
    </citation>
    <scope>NUCLEOTIDE SEQUENCE [LARGE SCALE MRNA]</scope>
    <source>
        <tissue>Urinary bladder</tissue>
    </source>
</reference>
<reference key="8">
    <citation type="journal article" date="1995" name="Biochem. Biophys. Res. Commun.">
        <title>Phorbol ester stimulates rapid intracellular phosphorylation of glia maturation factor.</title>
        <authorList>
            <person name="Lim R."/>
            <person name="Zaheer A."/>
        </authorList>
    </citation>
    <scope>PHOSPHORYLATION</scope>
</reference>
<reference key="9">
    <citation type="journal article" date="2009" name="Anal. Chem.">
        <title>Lys-N and trypsin cover complementary parts of the phosphoproteome in a refined SCX-based approach.</title>
        <authorList>
            <person name="Gauci S."/>
            <person name="Helbig A.O."/>
            <person name="Slijper M."/>
            <person name="Krijgsveld J."/>
            <person name="Heck A.J."/>
            <person name="Mohammed S."/>
        </authorList>
    </citation>
    <scope>ACETYLATION [LARGE SCALE ANALYSIS] AT SER-2</scope>
    <scope>CLEAVAGE OF INITIATOR METHIONINE [LARGE SCALE ANALYSIS]</scope>
    <scope>IDENTIFICATION BY MASS SPECTROMETRY [LARGE SCALE ANALYSIS]</scope>
</reference>
<reference key="10">
    <citation type="journal article" date="2011" name="BMC Syst. Biol.">
        <title>Initial characterization of the human central proteome.</title>
        <authorList>
            <person name="Burkard T.R."/>
            <person name="Planyavsky M."/>
            <person name="Kaupe I."/>
            <person name="Breitwieser F.P."/>
            <person name="Buerckstuemmer T."/>
            <person name="Bennett K.L."/>
            <person name="Superti-Furga G."/>
            <person name="Colinge J."/>
        </authorList>
    </citation>
    <scope>IDENTIFICATION BY MASS SPECTROMETRY [LARGE SCALE ANALYSIS]</scope>
</reference>
<reference key="11">
    <citation type="journal article" date="2012" name="Mol. Cell. Proteomics">
        <title>Comparative large-scale characterisation of plant vs. mammal proteins reveals similar and idiosyncratic N-alpha acetylation features.</title>
        <authorList>
            <person name="Bienvenut W.V."/>
            <person name="Sumpton D."/>
            <person name="Martinez A."/>
            <person name="Lilla S."/>
            <person name="Espagne C."/>
            <person name="Meinnel T."/>
            <person name="Giglione C."/>
        </authorList>
    </citation>
    <scope>ACETYLATION [LARGE SCALE ANALYSIS] AT SER-2</scope>
    <scope>CLEAVAGE OF INITIATOR METHIONINE [LARGE SCALE ANALYSIS]</scope>
    <scope>IDENTIFICATION BY MASS SPECTROMETRY [LARGE SCALE ANALYSIS]</scope>
</reference>
<reference key="12">
    <citation type="journal article" date="2012" name="Proc. Natl. Acad. Sci. U.S.A.">
        <title>N-terminal acetylome analyses and functional insights of the N-terminal acetyltransferase NatB.</title>
        <authorList>
            <person name="Van Damme P."/>
            <person name="Lasa M."/>
            <person name="Polevoda B."/>
            <person name="Gazquez C."/>
            <person name="Elosegui-Artola A."/>
            <person name="Kim D.S."/>
            <person name="De Juan-Pardo E."/>
            <person name="Demeyer K."/>
            <person name="Hole K."/>
            <person name="Larrea E."/>
            <person name="Timmerman E."/>
            <person name="Prieto J."/>
            <person name="Arnesen T."/>
            <person name="Sherman F."/>
            <person name="Gevaert K."/>
            <person name="Aldabe R."/>
        </authorList>
    </citation>
    <scope>ACETYLATION [LARGE SCALE ANALYSIS] AT SER-2</scope>
    <scope>CLEAVAGE OF INITIATOR METHIONINE [LARGE SCALE ANALYSIS]</scope>
    <scope>IDENTIFICATION BY MASS SPECTROMETRY [LARGE SCALE ANALYSIS]</scope>
</reference>
<reference key="13">
    <citation type="journal article" date="2014" name="J. Proteomics">
        <title>An enzyme assisted RP-RPLC approach for in-depth analysis of human liver phosphoproteome.</title>
        <authorList>
            <person name="Bian Y."/>
            <person name="Song C."/>
            <person name="Cheng K."/>
            <person name="Dong M."/>
            <person name="Wang F."/>
            <person name="Huang J."/>
            <person name="Sun D."/>
            <person name="Wang L."/>
            <person name="Ye M."/>
            <person name="Zou H."/>
        </authorList>
    </citation>
    <scope>IDENTIFICATION BY MASS SPECTROMETRY [LARGE SCALE ANALYSIS]</scope>
    <source>
        <tissue>Liver</tissue>
    </source>
</reference>
<dbReference type="EMBL" id="M86492">
    <property type="protein sequence ID" value="AAA58614.1"/>
    <property type="molecule type" value="mRNA"/>
</dbReference>
<dbReference type="EMBL" id="AB001106">
    <property type="protein sequence ID" value="BAA19232.1"/>
    <property type="molecule type" value="mRNA"/>
</dbReference>
<dbReference type="EMBL" id="BT006784">
    <property type="protein sequence ID" value="AAP35430.1"/>
    <property type="status" value="ALT_FRAME"/>
    <property type="molecule type" value="mRNA"/>
</dbReference>
<dbReference type="EMBL" id="CR542113">
    <property type="protein sequence ID" value="CAG46910.1"/>
    <property type="molecule type" value="mRNA"/>
</dbReference>
<dbReference type="EMBL" id="AK311753">
    <property type="protein sequence ID" value="BAG34696.1"/>
    <property type="molecule type" value="mRNA"/>
</dbReference>
<dbReference type="EMBL" id="CH471061">
    <property type="protein sequence ID" value="EAW80638.1"/>
    <property type="molecule type" value="Genomic_DNA"/>
</dbReference>
<dbReference type="EMBL" id="BC005359">
    <property type="protein sequence ID" value="AAH05359.1"/>
    <property type="status" value="ALT_FRAME"/>
    <property type="molecule type" value="mRNA"/>
</dbReference>
<dbReference type="CCDS" id="CCDS9718.1"/>
<dbReference type="PIR" id="PT0410">
    <property type="entry name" value="PT0410"/>
</dbReference>
<dbReference type="RefSeq" id="NP_004115.1">
    <property type="nucleotide sequence ID" value="NM_004124.3"/>
</dbReference>
<dbReference type="SMR" id="P60983"/>
<dbReference type="BioGRID" id="109026">
    <property type="interactions" value="31"/>
</dbReference>
<dbReference type="FunCoup" id="P60983">
    <property type="interactions" value="788"/>
</dbReference>
<dbReference type="IntAct" id="P60983">
    <property type="interactions" value="11"/>
</dbReference>
<dbReference type="STRING" id="9606.ENSP00000350757"/>
<dbReference type="GlyGen" id="P60983">
    <property type="glycosylation" value="1 site, 1 O-linked glycan (1 site)"/>
</dbReference>
<dbReference type="iPTMnet" id="P60983"/>
<dbReference type="PhosphoSitePlus" id="P60983"/>
<dbReference type="SwissPalm" id="P60983"/>
<dbReference type="BioMuta" id="GMFB"/>
<dbReference type="DMDM" id="46577593"/>
<dbReference type="OGP" id="P17774"/>
<dbReference type="jPOST" id="P60983"/>
<dbReference type="MassIVE" id="P60983"/>
<dbReference type="PaxDb" id="9606-ENSP00000350757"/>
<dbReference type="PeptideAtlas" id="P60983"/>
<dbReference type="ProteomicsDB" id="57242"/>
<dbReference type="Pumba" id="P60983"/>
<dbReference type="TopDownProteomics" id="P60983"/>
<dbReference type="Antibodypedia" id="23938">
    <property type="antibodies" value="258 antibodies from 30 providers"/>
</dbReference>
<dbReference type="DNASU" id="2764"/>
<dbReference type="Ensembl" id="ENST00000358056.8">
    <property type="protein sequence ID" value="ENSP00000350757.3"/>
    <property type="gene ID" value="ENSG00000197045.14"/>
</dbReference>
<dbReference type="GeneID" id="2764"/>
<dbReference type="KEGG" id="hsa:2764"/>
<dbReference type="MANE-Select" id="ENST00000358056.8">
    <property type="protein sequence ID" value="ENSP00000350757.3"/>
    <property type="RefSeq nucleotide sequence ID" value="NM_004124.3"/>
    <property type="RefSeq protein sequence ID" value="NP_004115.1"/>
</dbReference>
<dbReference type="UCSC" id="uc021rtf.2">
    <property type="organism name" value="human"/>
</dbReference>
<dbReference type="AGR" id="HGNC:4373"/>
<dbReference type="CTD" id="2764"/>
<dbReference type="DisGeNET" id="2764"/>
<dbReference type="GeneCards" id="GMFB"/>
<dbReference type="HGNC" id="HGNC:4373">
    <property type="gene designation" value="GMFB"/>
</dbReference>
<dbReference type="HPA" id="ENSG00000197045">
    <property type="expression patterns" value="Tissue enhanced (brain)"/>
</dbReference>
<dbReference type="MIM" id="601713">
    <property type="type" value="gene"/>
</dbReference>
<dbReference type="neXtProt" id="NX_P60983"/>
<dbReference type="OpenTargets" id="ENSG00000197045"/>
<dbReference type="PharmGKB" id="PA28758"/>
<dbReference type="VEuPathDB" id="HostDB:ENSG00000197045"/>
<dbReference type="eggNOG" id="KOG1736">
    <property type="taxonomic scope" value="Eukaryota"/>
</dbReference>
<dbReference type="GeneTree" id="ENSGT00390000008920"/>
<dbReference type="HOGENOM" id="CLU_087056_1_0_1"/>
<dbReference type="InParanoid" id="P60983"/>
<dbReference type="OMA" id="EWKMLYA"/>
<dbReference type="OrthoDB" id="3919494at2759"/>
<dbReference type="PAN-GO" id="P60983">
    <property type="GO annotations" value="4 GO annotations based on evolutionary models"/>
</dbReference>
<dbReference type="PhylomeDB" id="P60983"/>
<dbReference type="TreeFam" id="TF315147"/>
<dbReference type="PathwayCommons" id="P60983"/>
<dbReference type="SignaLink" id="P60983"/>
<dbReference type="SIGNOR" id="P60983"/>
<dbReference type="BioGRID-ORCS" id="2764">
    <property type="hits" value="9 hits in 1141 CRISPR screens"/>
</dbReference>
<dbReference type="ChiTaRS" id="GMFB">
    <property type="organism name" value="human"/>
</dbReference>
<dbReference type="GenomeRNAi" id="2764"/>
<dbReference type="Pharos" id="P60983">
    <property type="development level" value="Tbio"/>
</dbReference>
<dbReference type="PRO" id="PR:P60983"/>
<dbReference type="Proteomes" id="UP000005640">
    <property type="component" value="Chromosome 14"/>
</dbReference>
<dbReference type="RNAct" id="P60983">
    <property type="molecule type" value="protein"/>
</dbReference>
<dbReference type="Bgee" id="ENSG00000197045">
    <property type="expression patterns" value="Expressed in dorsal motor nucleus of vagus nerve and 212 other cell types or tissues"/>
</dbReference>
<dbReference type="ExpressionAtlas" id="P60983">
    <property type="expression patterns" value="baseline and differential"/>
</dbReference>
<dbReference type="GO" id="GO:0030864">
    <property type="term" value="C:cortical actin cytoskeleton"/>
    <property type="evidence" value="ECO:0000318"/>
    <property type="project" value="GO_Central"/>
</dbReference>
<dbReference type="GO" id="GO:0003779">
    <property type="term" value="F:actin binding"/>
    <property type="evidence" value="ECO:0007669"/>
    <property type="project" value="InterPro"/>
</dbReference>
<dbReference type="GO" id="GO:0071933">
    <property type="term" value="F:Arp2/3 complex binding"/>
    <property type="evidence" value="ECO:0000318"/>
    <property type="project" value="GO_Central"/>
</dbReference>
<dbReference type="GO" id="GO:0008047">
    <property type="term" value="F:enzyme activator activity"/>
    <property type="evidence" value="ECO:0000304"/>
    <property type="project" value="ProtInc"/>
</dbReference>
<dbReference type="GO" id="GO:0008083">
    <property type="term" value="F:growth factor activity"/>
    <property type="evidence" value="ECO:0007669"/>
    <property type="project" value="UniProtKB-KW"/>
</dbReference>
<dbReference type="GO" id="GO:0004860">
    <property type="term" value="F:protein kinase inhibitor activity"/>
    <property type="evidence" value="ECO:0000304"/>
    <property type="project" value="ProtInc"/>
</dbReference>
<dbReference type="GO" id="GO:0071846">
    <property type="term" value="P:actin filament debranching"/>
    <property type="evidence" value="ECO:0000318"/>
    <property type="project" value="GO_Central"/>
</dbReference>
<dbReference type="GO" id="GO:0007612">
    <property type="term" value="P:learning"/>
    <property type="evidence" value="ECO:0007669"/>
    <property type="project" value="Ensembl"/>
</dbReference>
<dbReference type="GO" id="GO:0007626">
    <property type="term" value="P:locomotory behavior"/>
    <property type="evidence" value="ECO:0007669"/>
    <property type="project" value="Ensembl"/>
</dbReference>
<dbReference type="GO" id="GO:0034316">
    <property type="term" value="P:negative regulation of Arp2/3 complex-mediated actin nucleation"/>
    <property type="evidence" value="ECO:0000318"/>
    <property type="project" value="GO_Central"/>
</dbReference>
<dbReference type="GO" id="GO:0007399">
    <property type="term" value="P:nervous system development"/>
    <property type="evidence" value="ECO:0000304"/>
    <property type="project" value="ProtInc"/>
</dbReference>
<dbReference type="GO" id="GO:0006468">
    <property type="term" value="P:protein phosphorylation"/>
    <property type="evidence" value="ECO:0000304"/>
    <property type="project" value="ProtInc"/>
</dbReference>
<dbReference type="CDD" id="cd11283">
    <property type="entry name" value="ADF_GMF-beta_like"/>
    <property type="match status" value="1"/>
</dbReference>
<dbReference type="FunFam" id="3.40.20.10:FF:000024">
    <property type="entry name" value="Glia maturation factor"/>
    <property type="match status" value="1"/>
</dbReference>
<dbReference type="Gene3D" id="3.40.20.10">
    <property type="entry name" value="Severin"/>
    <property type="match status" value="1"/>
</dbReference>
<dbReference type="InterPro" id="IPR002108">
    <property type="entry name" value="ADF-H"/>
</dbReference>
<dbReference type="InterPro" id="IPR029006">
    <property type="entry name" value="ADF-H/Gelsolin-like_dom_sf"/>
</dbReference>
<dbReference type="InterPro" id="IPR011171">
    <property type="entry name" value="GMF"/>
</dbReference>
<dbReference type="PANTHER" id="PTHR11249:SF3">
    <property type="entry name" value="GLIA MATURATION FACTOR BETA"/>
    <property type="match status" value="1"/>
</dbReference>
<dbReference type="PANTHER" id="PTHR11249">
    <property type="entry name" value="GLIAL FACTOR NATURATION FACTOR"/>
    <property type="match status" value="1"/>
</dbReference>
<dbReference type="Pfam" id="PF00241">
    <property type="entry name" value="Cofilin_ADF"/>
    <property type="match status" value="1"/>
</dbReference>
<dbReference type="PIRSF" id="PIRSF001788">
    <property type="entry name" value="GMF-beta"/>
    <property type="match status" value="1"/>
</dbReference>
<dbReference type="SMART" id="SM00102">
    <property type="entry name" value="ADF"/>
    <property type="match status" value="1"/>
</dbReference>
<dbReference type="SUPFAM" id="SSF55753">
    <property type="entry name" value="Actin depolymerizing proteins"/>
    <property type="match status" value="1"/>
</dbReference>
<dbReference type="PROSITE" id="PS51263">
    <property type="entry name" value="ADF_H"/>
    <property type="match status" value="1"/>
</dbReference>
<accession>P60983</accession>
<accession>B2R499</accession>
<accession>P17774</accession>
<accession>Q9BS35</accession>
<protein>
    <recommendedName>
        <fullName>Glia maturation factor beta</fullName>
        <shortName>GMF-beta</shortName>
    </recommendedName>
</protein>